<protein>
    <recommendedName>
        <fullName evidence="1">Hydroxyethylthiazole kinase</fullName>
        <ecNumber evidence="1">2.7.1.50</ecNumber>
    </recommendedName>
    <alternativeName>
        <fullName evidence="1">4-methyl-5-beta-hydroxyethylthiazole kinase</fullName>
        <shortName evidence="1">TH kinase</shortName>
        <shortName evidence="1">Thz kinase</shortName>
    </alternativeName>
</protein>
<keyword id="KW-0067">ATP-binding</keyword>
<keyword id="KW-0418">Kinase</keyword>
<keyword id="KW-0460">Magnesium</keyword>
<keyword id="KW-0479">Metal-binding</keyword>
<keyword id="KW-0547">Nucleotide-binding</keyword>
<keyword id="KW-0784">Thiamine biosynthesis</keyword>
<keyword id="KW-0808">Transferase</keyword>
<gene>
    <name evidence="1" type="primary">thiM</name>
    <name type="ordered locus">EcSMS35_0960</name>
</gene>
<name>THIM_ECOSM</name>
<reference key="1">
    <citation type="journal article" date="2008" name="J. Bacteriol.">
        <title>Insights into the environmental resistance gene pool from the genome sequence of the multidrug-resistant environmental isolate Escherichia coli SMS-3-5.</title>
        <authorList>
            <person name="Fricke W.F."/>
            <person name="Wright M.S."/>
            <person name="Lindell A.H."/>
            <person name="Harkins D.M."/>
            <person name="Baker-Austin C."/>
            <person name="Ravel J."/>
            <person name="Stepanauskas R."/>
        </authorList>
    </citation>
    <scope>NUCLEOTIDE SEQUENCE [LARGE SCALE GENOMIC DNA]</scope>
    <source>
        <strain>SMS-3-5 / SECEC</strain>
    </source>
</reference>
<dbReference type="EC" id="2.7.1.50" evidence="1"/>
<dbReference type="EMBL" id="CP000970">
    <property type="protein sequence ID" value="ACB18891.1"/>
    <property type="molecule type" value="Genomic_DNA"/>
</dbReference>
<dbReference type="RefSeq" id="WP_001195575.1">
    <property type="nucleotide sequence ID" value="NC_010498.1"/>
</dbReference>
<dbReference type="SMR" id="B1LN84"/>
<dbReference type="KEGG" id="ecm:EcSMS35_0960"/>
<dbReference type="HOGENOM" id="CLU_019943_0_1_6"/>
<dbReference type="UniPathway" id="UPA00060">
    <property type="reaction ID" value="UER00139"/>
</dbReference>
<dbReference type="Proteomes" id="UP000007011">
    <property type="component" value="Chromosome"/>
</dbReference>
<dbReference type="GO" id="GO:0005524">
    <property type="term" value="F:ATP binding"/>
    <property type="evidence" value="ECO:0007669"/>
    <property type="project" value="UniProtKB-UniRule"/>
</dbReference>
<dbReference type="GO" id="GO:0004417">
    <property type="term" value="F:hydroxyethylthiazole kinase activity"/>
    <property type="evidence" value="ECO:0007669"/>
    <property type="project" value="UniProtKB-UniRule"/>
</dbReference>
<dbReference type="GO" id="GO:0000287">
    <property type="term" value="F:magnesium ion binding"/>
    <property type="evidence" value="ECO:0007669"/>
    <property type="project" value="UniProtKB-UniRule"/>
</dbReference>
<dbReference type="GO" id="GO:0009228">
    <property type="term" value="P:thiamine biosynthetic process"/>
    <property type="evidence" value="ECO:0007669"/>
    <property type="project" value="UniProtKB-KW"/>
</dbReference>
<dbReference type="GO" id="GO:0009229">
    <property type="term" value="P:thiamine diphosphate biosynthetic process"/>
    <property type="evidence" value="ECO:0007669"/>
    <property type="project" value="UniProtKB-UniRule"/>
</dbReference>
<dbReference type="CDD" id="cd01170">
    <property type="entry name" value="THZ_kinase"/>
    <property type="match status" value="1"/>
</dbReference>
<dbReference type="FunFam" id="3.40.1190.20:FF:000015">
    <property type="entry name" value="Hydroxyethylthiazole kinase"/>
    <property type="match status" value="1"/>
</dbReference>
<dbReference type="Gene3D" id="3.40.1190.20">
    <property type="match status" value="1"/>
</dbReference>
<dbReference type="HAMAP" id="MF_00228">
    <property type="entry name" value="Thz_kinase"/>
    <property type="match status" value="1"/>
</dbReference>
<dbReference type="InterPro" id="IPR000417">
    <property type="entry name" value="Hyethyz_kinase"/>
</dbReference>
<dbReference type="InterPro" id="IPR029056">
    <property type="entry name" value="Ribokinase-like"/>
</dbReference>
<dbReference type="NCBIfam" id="NF006830">
    <property type="entry name" value="PRK09355.1"/>
    <property type="match status" value="1"/>
</dbReference>
<dbReference type="NCBIfam" id="TIGR00694">
    <property type="entry name" value="thiM"/>
    <property type="match status" value="1"/>
</dbReference>
<dbReference type="Pfam" id="PF02110">
    <property type="entry name" value="HK"/>
    <property type="match status" value="1"/>
</dbReference>
<dbReference type="PIRSF" id="PIRSF000513">
    <property type="entry name" value="Thz_kinase"/>
    <property type="match status" value="1"/>
</dbReference>
<dbReference type="PRINTS" id="PR01099">
    <property type="entry name" value="HYETHTZKNASE"/>
</dbReference>
<dbReference type="SUPFAM" id="SSF53613">
    <property type="entry name" value="Ribokinase-like"/>
    <property type="match status" value="1"/>
</dbReference>
<proteinExistence type="inferred from homology"/>
<feature type="chain" id="PRO_1000198119" description="Hydroxyethylthiazole kinase">
    <location>
        <begin position="1"/>
        <end position="262"/>
    </location>
</feature>
<feature type="binding site" evidence="1">
    <location>
        <position position="50"/>
    </location>
    <ligand>
        <name>substrate</name>
    </ligand>
</feature>
<feature type="binding site" evidence="1">
    <location>
        <position position="125"/>
    </location>
    <ligand>
        <name>ATP</name>
        <dbReference type="ChEBI" id="CHEBI:30616"/>
    </ligand>
</feature>
<feature type="binding site" evidence="1">
    <location>
        <position position="171"/>
    </location>
    <ligand>
        <name>ATP</name>
        <dbReference type="ChEBI" id="CHEBI:30616"/>
    </ligand>
</feature>
<feature type="binding site" evidence="1">
    <location>
        <position position="198"/>
    </location>
    <ligand>
        <name>substrate</name>
    </ligand>
</feature>
<accession>B1LN84</accession>
<organism>
    <name type="scientific">Escherichia coli (strain SMS-3-5 / SECEC)</name>
    <dbReference type="NCBI Taxonomy" id="439855"/>
    <lineage>
        <taxon>Bacteria</taxon>
        <taxon>Pseudomonadati</taxon>
        <taxon>Pseudomonadota</taxon>
        <taxon>Gammaproteobacteria</taxon>
        <taxon>Enterobacterales</taxon>
        <taxon>Enterobacteriaceae</taxon>
        <taxon>Escherichia</taxon>
    </lineage>
</organism>
<evidence type="ECO:0000255" key="1">
    <source>
        <dbReference type="HAMAP-Rule" id="MF_00228"/>
    </source>
</evidence>
<comment type="function">
    <text evidence="1">Catalyzes the phosphorylation of the hydroxyl group of 4-methyl-5-beta-hydroxyethylthiazole (THZ).</text>
</comment>
<comment type="catalytic activity">
    <reaction evidence="1">
        <text>5-(2-hydroxyethyl)-4-methylthiazole + ATP = 4-methyl-5-(2-phosphooxyethyl)-thiazole + ADP + H(+)</text>
        <dbReference type="Rhea" id="RHEA:24212"/>
        <dbReference type="ChEBI" id="CHEBI:15378"/>
        <dbReference type="ChEBI" id="CHEBI:17957"/>
        <dbReference type="ChEBI" id="CHEBI:30616"/>
        <dbReference type="ChEBI" id="CHEBI:58296"/>
        <dbReference type="ChEBI" id="CHEBI:456216"/>
        <dbReference type="EC" id="2.7.1.50"/>
    </reaction>
</comment>
<comment type="cofactor">
    <cofactor evidence="1">
        <name>Mg(2+)</name>
        <dbReference type="ChEBI" id="CHEBI:18420"/>
    </cofactor>
</comment>
<comment type="pathway">
    <text evidence="1">Cofactor biosynthesis; thiamine diphosphate biosynthesis; 4-methyl-5-(2-phosphoethyl)-thiazole from 5-(2-hydroxyethyl)-4-methylthiazole: step 1/1.</text>
</comment>
<comment type="similarity">
    <text evidence="1">Belongs to the Thz kinase family.</text>
</comment>
<sequence>MQVDLLSSAQSAHALHLFHKHSPLVHCMTNDVVQTFTANTLLALGASPAMVIETEEASQFAAIASALLINVGTLTQPRAQAMRAAVEQAKRSQTPWTLDPVAVGALDYRRRFCLELLSHKPTAIRGNASEIMALAGVANGGRGVDTTDAAANAIPAAQTLARETGAIVVVTGEVDYVTDGHRIVGIHGGDPLMTKVVGTGCALSAVVAACCALPGDTLENIAFACHWMKQAGERAVARSEGPGSFVPHFLDALWQLTQEVQA</sequence>